<keyword id="KW-0028">Amino-acid biosynthesis</keyword>
<keyword id="KW-0100">Branched-chain amino acid biosynthesis</keyword>
<keyword id="KW-0460">Magnesium</keyword>
<keyword id="KW-0479">Metal-binding</keyword>
<keyword id="KW-0521">NADP</keyword>
<keyword id="KW-0560">Oxidoreductase</keyword>
<keyword id="KW-1185">Reference proteome</keyword>
<keyword id="KW-0677">Repeat</keyword>
<dbReference type="EC" id="1.1.1.86" evidence="1"/>
<dbReference type="EMBL" id="CP000462">
    <property type="protein sequence ID" value="ABK38758.1"/>
    <property type="molecule type" value="Genomic_DNA"/>
</dbReference>
<dbReference type="RefSeq" id="WP_011704175.1">
    <property type="nucleotide sequence ID" value="NC_008570.1"/>
</dbReference>
<dbReference type="RefSeq" id="YP_854686.1">
    <property type="nucleotide sequence ID" value="NC_008570.1"/>
</dbReference>
<dbReference type="SMR" id="A0KEM1"/>
<dbReference type="STRING" id="380703.AHA_0153"/>
<dbReference type="EnsemblBacteria" id="ABK38758">
    <property type="protein sequence ID" value="ABK38758"/>
    <property type="gene ID" value="AHA_0153"/>
</dbReference>
<dbReference type="GeneID" id="4490334"/>
<dbReference type="KEGG" id="aha:AHA_0153"/>
<dbReference type="PATRIC" id="fig|380703.7.peg.143"/>
<dbReference type="eggNOG" id="COG0059">
    <property type="taxonomic scope" value="Bacteria"/>
</dbReference>
<dbReference type="HOGENOM" id="CLU_551905_0_0_6"/>
<dbReference type="OrthoDB" id="9804088at2"/>
<dbReference type="UniPathway" id="UPA00047">
    <property type="reaction ID" value="UER00056"/>
</dbReference>
<dbReference type="UniPathway" id="UPA00049">
    <property type="reaction ID" value="UER00060"/>
</dbReference>
<dbReference type="Proteomes" id="UP000000756">
    <property type="component" value="Chromosome"/>
</dbReference>
<dbReference type="GO" id="GO:0005829">
    <property type="term" value="C:cytosol"/>
    <property type="evidence" value="ECO:0007669"/>
    <property type="project" value="TreeGrafter"/>
</dbReference>
<dbReference type="GO" id="GO:0004455">
    <property type="term" value="F:ketol-acid reductoisomerase activity"/>
    <property type="evidence" value="ECO:0007669"/>
    <property type="project" value="UniProtKB-UniRule"/>
</dbReference>
<dbReference type="GO" id="GO:0000287">
    <property type="term" value="F:magnesium ion binding"/>
    <property type="evidence" value="ECO:0007669"/>
    <property type="project" value="UniProtKB-UniRule"/>
</dbReference>
<dbReference type="GO" id="GO:0009097">
    <property type="term" value="P:isoleucine biosynthetic process"/>
    <property type="evidence" value="ECO:0007669"/>
    <property type="project" value="UniProtKB-UniRule"/>
</dbReference>
<dbReference type="GO" id="GO:0009099">
    <property type="term" value="P:L-valine biosynthetic process"/>
    <property type="evidence" value="ECO:0007669"/>
    <property type="project" value="UniProtKB-UniRule"/>
</dbReference>
<dbReference type="FunFam" id="1.10.1040.10:FF:000007">
    <property type="entry name" value="Ketol-acid reductoisomerase (NADP(+))"/>
    <property type="match status" value="1"/>
</dbReference>
<dbReference type="FunFam" id="3.40.50.720:FF:000043">
    <property type="entry name" value="Ketol-acid reductoisomerase (NADP(+))"/>
    <property type="match status" value="1"/>
</dbReference>
<dbReference type="Gene3D" id="1.10.1040.10">
    <property type="entry name" value="N-(1-d-carboxylethyl)-l-norvaline Dehydrogenase, domain 2"/>
    <property type="match status" value="1"/>
</dbReference>
<dbReference type="Gene3D" id="3.40.50.720">
    <property type="entry name" value="NAD(P)-binding Rossmann-like Domain"/>
    <property type="match status" value="1"/>
</dbReference>
<dbReference type="HAMAP" id="MF_00435">
    <property type="entry name" value="IlvC"/>
    <property type="match status" value="1"/>
</dbReference>
<dbReference type="InterPro" id="IPR008927">
    <property type="entry name" value="6-PGluconate_DH-like_C_sf"/>
</dbReference>
<dbReference type="InterPro" id="IPR013328">
    <property type="entry name" value="6PGD_dom2"/>
</dbReference>
<dbReference type="InterPro" id="IPR013023">
    <property type="entry name" value="KARI"/>
</dbReference>
<dbReference type="InterPro" id="IPR000506">
    <property type="entry name" value="KARI_C"/>
</dbReference>
<dbReference type="InterPro" id="IPR013116">
    <property type="entry name" value="KARI_N"/>
</dbReference>
<dbReference type="InterPro" id="IPR036291">
    <property type="entry name" value="NAD(P)-bd_dom_sf"/>
</dbReference>
<dbReference type="NCBIfam" id="TIGR00465">
    <property type="entry name" value="ilvC"/>
    <property type="match status" value="1"/>
</dbReference>
<dbReference type="NCBIfam" id="NF003557">
    <property type="entry name" value="PRK05225.1"/>
    <property type="match status" value="1"/>
</dbReference>
<dbReference type="PANTHER" id="PTHR21371">
    <property type="entry name" value="KETOL-ACID REDUCTOISOMERASE, MITOCHONDRIAL"/>
    <property type="match status" value="1"/>
</dbReference>
<dbReference type="PANTHER" id="PTHR21371:SF1">
    <property type="entry name" value="KETOL-ACID REDUCTOISOMERASE, MITOCHONDRIAL"/>
    <property type="match status" value="1"/>
</dbReference>
<dbReference type="Pfam" id="PF01450">
    <property type="entry name" value="KARI_C"/>
    <property type="match status" value="2"/>
</dbReference>
<dbReference type="Pfam" id="PF07991">
    <property type="entry name" value="KARI_N"/>
    <property type="match status" value="1"/>
</dbReference>
<dbReference type="SUPFAM" id="SSF48179">
    <property type="entry name" value="6-phosphogluconate dehydrogenase C-terminal domain-like"/>
    <property type="match status" value="2"/>
</dbReference>
<dbReference type="SUPFAM" id="SSF51735">
    <property type="entry name" value="NAD(P)-binding Rossmann-fold domains"/>
    <property type="match status" value="1"/>
</dbReference>
<dbReference type="PROSITE" id="PS51851">
    <property type="entry name" value="KARI_C"/>
    <property type="match status" value="2"/>
</dbReference>
<dbReference type="PROSITE" id="PS51850">
    <property type="entry name" value="KARI_N"/>
    <property type="match status" value="1"/>
</dbReference>
<comment type="function">
    <text evidence="1">Involved in the biosynthesis of branched-chain amino acids (BCAA). Catalyzes an alkyl-migration followed by a ketol-acid reduction of (S)-2-acetolactate (S2AL) to yield (R)-2,3-dihydroxy-isovalerate. In the isomerase reaction, S2AL is rearranged via a Mg-dependent methyl migration to produce 3-hydroxy-3-methyl-2-ketobutyrate (HMKB). In the reductase reaction, this 2-ketoacid undergoes a metal-dependent reduction by NADPH to yield (R)-2,3-dihydroxy-isovalerate.</text>
</comment>
<comment type="catalytic activity">
    <reaction evidence="1">
        <text>(2R)-2,3-dihydroxy-3-methylbutanoate + NADP(+) = (2S)-2-acetolactate + NADPH + H(+)</text>
        <dbReference type="Rhea" id="RHEA:22068"/>
        <dbReference type="ChEBI" id="CHEBI:15378"/>
        <dbReference type="ChEBI" id="CHEBI:49072"/>
        <dbReference type="ChEBI" id="CHEBI:57783"/>
        <dbReference type="ChEBI" id="CHEBI:58349"/>
        <dbReference type="ChEBI" id="CHEBI:58476"/>
        <dbReference type="EC" id="1.1.1.86"/>
    </reaction>
</comment>
<comment type="catalytic activity">
    <reaction evidence="1">
        <text>(2R,3R)-2,3-dihydroxy-3-methylpentanoate + NADP(+) = (S)-2-ethyl-2-hydroxy-3-oxobutanoate + NADPH + H(+)</text>
        <dbReference type="Rhea" id="RHEA:13493"/>
        <dbReference type="ChEBI" id="CHEBI:15378"/>
        <dbReference type="ChEBI" id="CHEBI:49256"/>
        <dbReference type="ChEBI" id="CHEBI:49258"/>
        <dbReference type="ChEBI" id="CHEBI:57783"/>
        <dbReference type="ChEBI" id="CHEBI:58349"/>
        <dbReference type="EC" id="1.1.1.86"/>
    </reaction>
</comment>
<comment type="cofactor">
    <cofactor evidence="1">
        <name>Mg(2+)</name>
        <dbReference type="ChEBI" id="CHEBI:18420"/>
    </cofactor>
    <text evidence="1">Binds 2 magnesium ions per subunit.</text>
</comment>
<comment type="pathway">
    <text evidence="1">Amino-acid biosynthesis; L-isoleucine biosynthesis; L-isoleucine from 2-oxobutanoate: step 2/4.</text>
</comment>
<comment type="pathway">
    <text evidence="1">Amino-acid biosynthesis; L-valine biosynthesis; L-valine from pyruvate: step 2/4.</text>
</comment>
<comment type="similarity">
    <text evidence="1">Belongs to the ketol-acid reductoisomerase family.</text>
</comment>
<protein>
    <recommendedName>
        <fullName evidence="1">Ketol-acid reductoisomerase (NADP(+))</fullName>
        <shortName evidence="1">KARI</shortName>
        <ecNumber evidence="1">1.1.1.86</ecNumber>
    </recommendedName>
    <alternativeName>
        <fullName evidence="1">Acetohydroxy-acid isomeroreductase</fullName>
        <shortName evidence="1">AHIR</shortName>
    </alternativeName>
    <alternativeName>
        <fullName evidence="1">Alpha-keto-beta-hydroxylacyl reductoisomerase</fullName>
    </alternativeName>
    <alternativeName>
        <fullName evidence="1">Ketol-acid reductoisomerase type 2</fullName>
    </alternativeName>
    <alternativeName>
        <fullName evidence="1">Ketol-acid reductoisomerase type II</fullName>
    </alternativeName>
</protein>
<organism>
    <name type="scientific">Aeromonas hydrophila subsp. hydrophila (strain ATCC 7966 / DSM 30187 / BCRC 13018 / CCUG 14551 / JCM 1027 / KCTC 2358 / NCIMB 9240 / NCTC 8049)</name>
    <dbReference type="NCBI Taxonomy" id="380703"/>
    <lineage>
        <taxon>Bacteria</taxon>
        <taxon>Pseudomonadati</taxon>
        <taxon>Pseudomonadota</taxon>
        <taxon>Gammaproteobacteria</taxon>
        <taxon>Aeromonadales</taxon>
        <taxon>Aeromonadaceae</taxon>
        <taxon>Aeromonas</taxon>
    </lineage>
</organism>
<accession>A0KEM1</accession>
<evidence type="ECO:0000255" key="1">
    <source>
        <dbReference type="HAMAP-Rule" id="MF_00435"/>
    </source>
</evidence>
<evidence type="ECO:0000255" key="2">
    <source>
        <dbReference type="PROSITE-ProRule" id="PRU01197"/>
    </source>
</evidence>
<evidence type="ECO:0000255" key="3">
    <source>
        <dbReference type="PROSITE-ProRule" id="PRU01198"/>
    </source>
</evidence>
<sequence length="493" mass="53827">MANYFNTLNLRQQLAQLGKCRFMQREEFADGCNVLKGKKVVIVGCGAQGLNQGLNMRDSGLDISYALRKAAITEKRASWQKATDNGFAVGTYEELIPTADLVLNLTPDKQHSDVVKTVMPLMKQGAALGYSHGFNVVEEGQQIRADITVVMVAPKCPGTEVREEYKRGFGVPTLIAVHPENDPKGEGMAIAKAWASATGGDRAGVLESSFVAEVKSDLMGEQTILCGMLQAGSLLCYDKLVAEGTDPAYAGKLIQFGWETITEALKQGGISLMMDRLSNPAKLRAFELSEQLKTLMRPLFEKHMDDIIAGEFSRGMMADWAEDDAKLFGWREETGKSAFENAPAFAGKIAEQEYFDNGVVMVAMVKAGVELAFETMVASGIYEESAYYESLHELPLIANTVARKRLYEMNVVISDTAEYGNYLFANAAVPLLREHFMPTLKAGDLGASKAEGQSVDNLALLAANEATRNHPIEKIGQVLRGYMKDMKRIAVGG</sequence>
<reference key="1">
    <citation type="journal article" date="2006" name="J. Bacteriol.">
        <title>Genome sequence of Aeromonas hydrophila ATCC 7966T: jack of all trades.</title>
        <authorList>
            <person name="Seshadri R."/>
            <person name="Joseph S.W."/>
            <person name="Chopra A.K."/>
            <person name="Sha J."/>
            <person name="Shaw J."/>
            <person name="Graf J."/>
            <person name="Haft D.H."/>
            <person name="Wu M."/>
            <person name="Ren Q."/>
            <person name="Rosovitz M.J."/>
            <person name="Madupu R."/>
            <person name="Tallon L."/>
            <person name="Kim M."/>
            <person name="Jin S."/>
            <person name="Vuong H."/>
            <person name="Stine O.C."/>
            <person name="Ali A."/>
            <person name="Horneman A.J."/>
            <person name="Heidelberg J.F."/>
        </authorList>
    </citation>
    <scope>NUCLEOTIDE SEQUENCE [LARGE SCALE GENOMIC DNA]</scope>
    <source>
        <strain>ATCC 7966 / DSM 30187 / BCRC 13018 / CCUG 14551 / JCM 1027 / KCTC 2358 / NCIMB 9240 / NCTC 8049</strain>
    </source>
</reference>
<name>ILVC_AERHH</name>
<gene>
    <name evidence="1" type="primary">ilvC</name>
    <name type="ordered locus">AHA_0153</name>
</gene>
<proteinExistence type="inferred from homology"/>
<feature type="chain" id="PRO_1000050474" description="Ketol-acid reductoisomerase (NADP(+))">
    <location>
        <begin position="1"/>
        <end position="493"/>
    </location>
</feature>
<feature type="domain" description="KARI N-terminal Rossmann" evidence="2">
    <location>
        <begin position="15"/>
        <end position="208"/>
    </location>
</feature>
<feature type="domain" description="KARI C-terminal knotted 1" evidence="3">
    <location>
        <begin position="209"/>
        <end position="344"/>
    </location>
</feature>
<feature type="domain" description="KARI C-terminal knotted 2" evidence="3">
    <location>
        <begin position="345"/>
        <end position="486"/>
    </location>
</feature>
<feature type="active site" evidence="1">
    <location>
        <position position="132"/>
    </location>
</feature>
<feature type="binding site" evidence="1">
    <location>
        <begin position="45"/>
        <end position="48"/>
    </location>
    <ligand>
        <name>NADP(+)</name>
        <dbReference type="ChEBI" id="CHEBI:58349"/>
    </ligand>
</feature>
<feature type="binding site" evidence="1">
    <location>
        <position position="68"/>
    </location>
    <ligand>
        <name>NADP(+)</name>
        <dbReference type="ChEBI" id="CHEBI:58349"/>
    </ligand>
</feature>
<feature type="binding site" evidence="1">
    <location>
        <position position="76"/>
    </location>
    <ligand>
        <name>NADP(+)</name>
        <dbReference type="ChEBI" id="CHEBI:58349"/>
    </ligand>
</feature>
<feature type="binding site" evidence="1">
    <location>
        <position position="78"/>
    </location>
    <ligand>
        <name>NADP(+)</name>
        <dbReference type="ChEBI" id="CHEBI:58349"/>
    </ligand>
</feature>
<feature type="binding site" evidence="1">
    <location>
        <begin position="108"/>
        <end position="110"/>
    </location>
    <ligand>
        <name>NADP(+)</name>
        <dbReference type="ChEBI" id="CHEBI:58349"/>
    </ligand>
</feature>
<feature type="binding site" evidence="1">
    <location>
        <position position="158"/>
    </location>
    <ligand>
        <name>NADP(+)</name>
        <dbReference type="ChEBI" id="CHEBI:58349"/>
    </ligand>
</feature>
<feature type="binding site" evidence="1">
    <location>
        <position position="217"/>
    </location>
    <ligand>
        <name>Mg(2+)</name>
        <dbReference type="ChEBI" id="CHEBI:18420"/>
        <label>1</label>
    </ligand>
</feature>
<feature type="binding site" evidence="1">
    <location>
        <position position="217"/>
    </location>
    <ligand>
        <name>Mg(2+)</name>
        <dbReference type="ChEBI" id="CHEBI:18420"/>
        <label>2</label>
    </ligand>
</feature>
<feature type="binding site" evidence="1">
    <location>
        <position position="221"/>
    </location>
    <ligand>
        <name>Mg(2+)</name>
        <dbReference type="ChEBI" id="CHEBI:18420"/>
        <label>1</label>
    </ligand>
</feature>
<feature type="binding site" evidence="1">
    <location>
        <position position="389"/>
    </location>
    <ligand>
        <name>Mg(2+)</name>
        <dbReference type="ChEBI" id="CHEBI:18420"/>
        <label>2</label>
    </ligand>
</feature>
<feature type="binding site" evidence="1">
    <location>
        <position position="393"/>
    </location>
    <ligand>
        <name>Mg(2+)</name>
        <dbReference type="ChEBI" id="CHEBI:18420"/>
        <label>2</label>
    </ligand>
</feature>
<feature type="binding site" evidence="1">
    <location>
        <position position="414"/>
    </location>
    <ligand>
        <name>substrate</name>
    </ligand>
</feature>